<feature type="initiator methionine" description="Removed" evidence="1">
    <location>
        <position position="1"/>
    </location>
</feature>
<feature type="chain" id="PRO_1000008775" description="Formamidopyrimidine-DNA glycosylase">
    <location>
        <begin position="2"/>
        <end position="271"/>
    </location>
</feature>
<feature type="zinc finger region" description="FPG-type" evidence="2">
    <location>
        <begin position="236"/>
        <end position="270"/>
    </location>
</feature>
<feature type="active site" description="Schiff-base intermediate with DNA" evidence="2">
    <location>
        <position position="2"/>
    </location>
</feature>
<feature type="active site" description="Proton donor" evidence="2">
    <location>
        <position position="3"/>
    </location>
</feature>
<feature type="active site" description="Proton donor; for beta-elimination activity" evidence="2">
    <location>
        <position position="57"/>
    </location>
</feature>
<feature type="active site" description="Proton donor; for delta-elimination activity" evidence="2">
    <location>
        <position position="260"/>
    </location>
</feature>
<feature type="binding site" evidence="2">
    <location>
        <position position="90"/>
    </location>
    <ligand>
        <name>DNA</name>
        <dbReference type="ChEBI" id="CHEBI:16991"/>
    </ligand>
</feature>
<feature type="binding site" evidence="2">
    <location>
        <position position="109"/>
    </location>
    <ligand>
        <name>DNA</name>
        <dbReference type="ChEBI" id="CHEBI:16991"/>
    </ligand>
</feature>
<feature type="binding site" evidence="2">
    <location>
        <position position="151"/>
    </location>
    <ligand>
        <name>DNA</name>
        <dbReference type="ChEBI" id="CHEBI:16991"/>
    </ligand>
</feature>
<comment type="function">
    <text evidence="2">Involved in base excision repair of DNA damaged by oxidation or by mutagenic agents. Acts as a DNA glycosylase that recognizes and removes damaged bases. Has a preference for oxidized purines, such as 7,8-dihydro-8-oxoguanine (8-oxoG). Has AP (apurinic/apyrimidinic) lyase activity and introduces nicks in the DNA strand. Cleaves the DNA backbone by beta-delta elimination to generate a single-strand break at the site of the removed base with both 3'- and 5'-phosphates.</text>
</comment>
<comment type="catalytic activity">
    <reaction evidence="2">
        <text>Hydrolysis of DNA containing ring-opened 7-methylguanine residues, releasing 2,6-diamino-4-hydroxy-5-(N-methyl)formamidopyrimidine.</text>
        <dbReference type="EC" id="3.2.2.23"/>
    </reaction>
</comment>
<comment type="catalytic activity">
    <reaction evidence="2">
        <text>2'-deoxyribonucleotide-(2'-deoxyribose 5'-phosphate)-2'-deoxyribonucleotide-DNA = a 3'-end 2'-deoxyribonucleotide-(2,3-dehydro-2,3-deoxyribose 5'-phosphate)-DNA + a 5'-end 5'-phospho-2'-deoxyribonucleoside-DNA + H(+)</text>
        <dbReference type="Rhea" id="RHEA:66592"/>
        <dbReference type="Rhea" id="RHEA-COMP:13180"/>
        <dbReference type="Rhea" id="RHEA-COMP:16897"/>
        <dbReference type="Rhea" id="RHEA-COMP:17067"/>
        <dbReference type="ChEBI" id="CHEBI:15378"/>
        <dbReference type="ChEBI" id="CHEBI:136412"/>
        <dbReference type="ChEBI" id="CHEBI:157695"/>
        <dbReference type="ChEBI" id="CHEBI:167181"/>
        <dbReference type="EC" id="4.2.99.18"/>
    </reaction>
</comment>
<comment type="cofactor">
    <cofactor evidence="2">
        <name>Zn(2+)</name>
        <dbReference type="ChEBI" id="CHEBI:29105"/>
    </cofactor>
    <text evidence="2">Binds 1 zinc ion per subunit.</text>
</comment>
<comment type="subunit">
    <text evidence="2">Monomer.</text>
</comment>
<comment type="similarity">
    <text evidence="2">Belongs to the FPG family.</text>
</comment>
<organism>
    <name type="scientific">Shewanella sp. (strain MR-4)</name>
    <dbReference type="NCBI Taxonomy" id="60480"/>
    <lineage>
        <taxon>Bacteria</taxon>
        <taxon>Pseudomonadati</taxon>
        <taxon>Pseudomonadota</taxon>
        <taxon>Gammaproteobacteria</taxon>
        <taxon>Alteromonadales</taxon>
        <taxon>Shewanellaceae</taxon>
        <taxon>Shewanella</taxon>
    </lineage>
</organism>
<reference key="1">
    <citation type="submission" date="2006-08" db="EMBL/GenBank/DDBJ databases">
        <title>Complete sequence of Shewanella sp. MR-4.</title>
        <authorList>
            <consortium name="US DOE Joint Genome Institute"/>
            <person name="Copeland A."/>
            <person name="Lucas S."/>
            <person name="Lapidus A."/>
            <person name="Barry K."/>
            <person name="Detter J.C."/>
            <person name="Glavina del Rio T."/>
            <person name="Hammon N."/>
            <person name="Israni S."/>
            <person name="Dalin E."/>
            <person name="Tice H."/>
            <person name="Pitluck S."/>
            <person name="Kiss H."/>
            <person name="Brettin T."/>
            <person name="Bruce D."/>
            <person name="Han C."/>
            <person name="Tapia R."/>
            <person name="Gilna P."/>
            <person name="Schmutz J."/>
            <person name="Larimer F."/>
            <person name="Land M."/>
            <person name="Hauser L."/>
            <person name="Kyrpides N."/>
            <person name="Mikhailova N."/>
            <person name="Nealson K."/>
            <person name="Konstantinidis K."/>
            <person name="Klappenbach J."/>
            <person name="Tiedje J."/>
            <person name="Richardson P."/>
        </authorList>
    </citation>
    <scope>NUCLEOTIDE SEQUENCE [LARGE SCALE GENOMIC DNA]</scope>
    <source>
        <strain>MR-4</strain>
    </source>
</reference>
<dbReference type="EC" id="3.2.2.23" evidence="2"/>
<dbReference type="EC" id="4.2.99.18" evidence="2"/>
<dbReference type="EMBL" id="CP000446">
    <property type="protein sequence ID" value="ABI40944.1"/>
    <property type="molecule type" value="Genomic_DNA"/>
</dbReference>
<dbReference type="RefSeq" id="WP_011624602.1">
    <property type="nucleotide sequence ID" value="NC_008321.1"/>
</dbReference>
<dbReference type="SMR" id="Q0HDC3"/>
<dbReference type="KEGG" id="she:Shewmr4_3881"/>
<dbReference type="HOGENOM" id="CLU_038423_1_1_6"/>
<dbReference type="GO" id="GO:0034039">
    <property type="term" value="F:8-oxo-7,8-dihydroguanine DNA N-glycosylase activity"/>
    <property type="evidence" value="ECO:0007669"/>
    <property type="project" value="TreeGrafter"/>
</dbReference>
<dbReference type="GO" id="GO:0140078">
    <property type="term" value="F:class I DNA-(apurinic or apyrimidinic site) endonuclease activity"/>
    <property type="evidence" value="ECO:0007669"/>
    <property type="project" value="UniProtKB-EC"/>
</dbReference>
<dbReference type="GO" id="GO:0003684">
    <property type="term" value="F:damaged DNA binding"/>
    <property type="evidence" value="ECO:0007669"/>
    <property type="project" value="InterPro"/>
</dbReference>
<dbReference type="GO" id="GO:0008270">
    <property type="term" value="F:zinc ion binding"/>
    <property type="evidence" value="ECO:0007669"/>
    <property type="project" value="UniProtKB-UniRule"/>
</dbReference>
<dbReference type="GO" id="GO:0006284">
    <property type="term" value="P:base-excision repair"/>
    <property type="evidence" value="ECO:0007669"/>
    <property type="project" value="InterPro"/>
</dbReference>
<dbReference type="CDD" id="cd08966">
    <property type="entry name" value="EcFpg-like_N"/>
    <property type="match status" value="1"/>
</dbReference>
<dbReference type="FunFam" id="1.10.8.50:FF:000003">
    <property type="entry name" value="Formamidopyrimidine-DNA glycosylase"/>
    <property type="match status" value="1"/>
</dbReference>
<dbReference type="FunFam" id="3.20.190.10:FF:000001">
    <property type="entry name" value="Formamidopyrimidine-DNA glycosylase"/>
    <property type="match status" value="1"/>
</dbReference>
<dbReference type="Gene3D" id="1.10.8.50">
    <property type="match status" value="1"/>
</dbReference>
<dbReference type="Gene3D" id="3.20.190.10">
    <property type="entry name" value="MutM-like, N-terminal"/>
    <property type="match status" value="1"/>
</dbReference>
<dbReference type="HAMAP" id="MF_00103">
    <property type="entry name" value="Fapy_DNA_glycosyl"/>
    <property type="match status" value="1"/>
</dbReference>
<dbReference type="InterPro" id="IPR015886">
    <property type="entry name" value="DNA_glyclase/AP_lyase_DNA-bd"/>
</dbReference>
<dbReference type="InterPro" id="IPR015887">
    <property type="entry name" value="DNA_glyclase_Znf_dom_DNA_BS"/>
</dbReference>
<dbReference type="InterPro" id="IPR020629">
    <property type="entry name" value="Formamido-pyr_DNA_Glyclase"/>
</dbReference>
<dbReference type="InterPro" id="IPR012319">
    <property type="entry name" value="FPG_cat"/>
</dbReference>
<dbReference type="InterPro" id="IPR035937">
    <property type="entry name" value="MutM-like_N-ter"/>
</dbReference>
<dbReference type="InterPro" id="IPR010979">
    <property type="entry name" value="Ribosomal_uS13-like_H2TH"/>
</dbReference>
<dbReference type="InterPro" id="IPR000214">
    <property type="entry name" value="Znf_DNA_glyclase/AP_lyase"/>
</dbReference>
<dbReference type="InterPro" id="IPR010663">
    <property type="entry name" value="Znf_FPG/IleRS"/>
</dbReference>
<dbReference type="NCBIfam" id="TIGR00577">
    <property type="entry name" value="fpg"/>
    <property type="match status" value="1"/>
</dbReference>
<dbReference type="NCBIfam" id="NF002211">
    <property type="entry name" value="PRK01103.1"/>
    <property type="match status" value="1"/>
</dbReference>
<dbReference type="PANTHER" id="PTHR22993">
    <property type="entry name" value="FORMAMIDOPYRIMIDINE-DNA GLYCOSYLASE"/>
    <property type="match status" value="1"/>
</dbReference>
<dbReference type="PANTHER" id="PTHR22993:SF9">
    <property type="entry name" value="FORMAMIDOPYRIMIDINE-DNA GLYCOSYLASE"/>
    <property type="match status" value="1"/>
</dbReference>
<dbReference type="Pfam" id="PF01149">
    <property type="entry name" value="Fapy_DNA_glyco"/>
    <property type="match status" value="1"/>
</dbReference>
<dbReference type="Pfam" id="PF06831">
    <property type="entry name" value="H2TH"/>
    <property type="match status" value="1"/>
</dbReference>
<dbReference type="Pfam" id="PF06827">
    <property type="entry name" value="zf-FPG_IleRS"/>
    <property type="match status" value="1"/>
</dbReference>
<dbReference type="SMART" id="SM00898">
    <property type="entry name" value="Fapy_DNA_glyco"/>
    <property type="match status" value="1"/>
</dbReference>
<dbReference type="SMART" id="SM01232">
    <property type="entry name" value="H2TH"/>
    <property type="match status" value="1"/>
</dbReference>
<dbReference type="SUPFAM" id="SSF57716">
    <property type="entry name" value="Glucocorticoid receptor-like (DNA-binding domain)"/>
    <property type="match status" value="1"/>
</dbReference>
<dbReference type="SUPFAM" id="SSF81624">
    <property type="entry name" value="N-terminal domain of MutM-like DNA repair proteins"/>
    <property type="match status" value="1"/>
</dbReference>
<dbReference type="SUPFAM" id="SSF46946">
    <property type="entry name" value="S13-like H2TH domain"/>
    <property type="match status" value="1"/>
</dbReference>
<dbReference type="PROSITE" id="PS51068">
    <property type="entry name" value="FPG_CAT"/>
    <property type="match status" value="1"/>
</dbReference>
<dbReference type="PROSITE" id="PS01242">
    <property type="entry name" value="ZF_FPG_1"/>
    <property type="match status" value="1"/>
</dbReference>
<dbReference type="PROSITE" id="PS51066">
    <property type="entry name" value="ZF_FPG_2"/>
    <property type="match status" value="1"/>
</dbReference>
<gene>
    <name evidence="2" type="primary">mutM</name>
    <name evidence="2" type="synonym">fpg</name>
    <name type="ordered locus">Shewmr4_3881</name>
</gene>
<proteinExistence type="inferred from homology"/>
<keyword id="KW-0227">DNA damage</keyword>
<keyword id="KW-0234">DNA repair</keyword>
<keyword id="KW-0238">DNA-binding</keyword>
<keyword id="KW-0326">Glycosidase</keyword>
<keyword id="KW-0378">Hydrolase</keyword>
<keyword id="KW-0456">Lyase</keyword>
<keyword id="KW-0479">Metal-binding</keyword>
<keyword id="KW-0511">Multifunctional enzyme</keyword>
<keyword id="KW-0862">Zinc</keyword>
<keyword id="KW-0863">Zinc-finger</keyword>
<sequence length="271" mass="29859">MPELPEVEVTRQGIAPHLVEQTVVDLVIRNASLRWPVPELAKQIIGQTIRQVRRRAKYLLIDTDAGTSIVHLGMSGSLRILPHDTPVEKHDHIDLVLANGRILRFNDPRRFGAWLWCQLPEEAHPLLEKLGPEPLTDAFNVNQLAAALAGKKKAIKLCLMDNHIVVGVGNIYANEALFAAGIHPEAEAGKIDIERLTVLVAEVKQILAHAIKQGGTTLKDFTNAEGKPGYFAQKLHVYGRGGETCTQCGNLLSEIRLGQRTTVFCGICQTR</sequence>
<name>FPG_SHESM</name>
<protein>
    <recommendedName>
        <fullName evidence="2">Formamidopyrimidine-DNA glycosylase</fullName>
        <shortName evidence="2">Fapy-DNA glycosylase</shortName>
        <ecNumber evidence="2">3.2.2.23</ecNumber>
    </recommendedName>
    <alternativeName>
        <fullName evidence="2">DNA-(apurinic or apyrimidinic site) lyase MutM</fullName>
        <shortName evidence="2">AP lyase MutM</shortName>
        <ecNumber evidence="2">4.2.99.18</ecNumber>
    </alternativeName>
</protein>
<evidence type="ECO:0000250" key="1"/>
<evidence type="ECO:0000255" key="2">
    <source>
        <dbReference type="HAMAP-Rule" id="MF_00103"/>
    </source>
</evidence>
<accession>Q0HDC3</accession>